<evidence type="ECO:0000250" key="1"/>
<evidence type="ECO:0000305" key="2"/>
<accession>Q6GFX3</accession>
<gene>
    <name type="primary">acuC</name>
    <name type="ordered locus">SAR1813</name>
</gene>
<name>ACUC_STAAR</name>
<comment type="function">
    <text evidence="1">Role in growth on acetoin or butanediol. Involved in the breakdown of these compounds used as a carbon source (By similarity).</text>
</comment>
<comment type="pathway">
    <text>Ketone degradation; acetoin degradation.</text>
</comment>
<comment type="similarity">
    <text evidence="2">Belongs to the histone deacetylase family.</text>
</comment>
<sequence length="389" mass="44675">MQQHLSKTAYVYSDKLLQYRFHDQHPFNQMRLKLTTELLLNANLLSPEQIVQPRIATDDELMLIHKYDYVEAIKHASHGIISEDEAMKYGLNDEENGQFKHMHRHSATIVGGALTLADLIMSGKALNGCHLGGGLHHAQPGRASGFCIYNDIAITAQYLAKEYNQRVLIIDTDAHHGDGTQWSFYADNHVTTYSIHETGKFLFPGSGHYTERGEDIGYGHTVNVPLEPYTEDSSFLECFKLTVEPVVKSFKPDIILSVNGVDIHYRDPLTHLNCTLHSLYEIPYFVKYLADTYTNGKIIMFGGGGYNIWRVVPRAWSHVFLSLIDQPIQSGYLPLEWINKWKHYSSELLPKRWEDRLNDYTYVPRTKEISEKNKKLALHIASWYESTRQ</sequence>
<proteinExistence type="inferred from homology"/>
<protein>
    <recommendedName>
        <fullName>Acetoin utilization protein AcuC</fullName>
    </recommendedName>
</protein>
<feature type="chain" id="PRO_0000114733" description="Acetoin utilization protein AcuC">
    <location>
        <begin position="1"/>
        <end position="389"/>
    </location>
</feature>
<organism>
    <name type="scientific">Staphylococcus aureus (strain MRSA252)</name>
    <dbReference type="NCBI Taxonomy" id="282458"/>
    <lineage>
        <taxon>Bacteria</taxon>
        <taxon>Bacillati</taxon>
        <taxon>Bacillota</taxon>
        <taxon>Bacilli</taxon>
        <taxon>Bacillales</taxon>
        <taxon>Staphylococcaceae</taxon>
        <taxon>Staphylococcus</taxon>
    </lineage>
</organism>
<reference key="1">
    <citation type="journal article" date="2004" name="Proc. Natl. Acad. Sci. U.S.A.">
        <title>Complete genomes of two clinical Staphylococcus aureus strains: evidence for the rapid evolution of virulence and drug resistance.</title>
        <authorList>
            <person name="Holden M.T.G."/>
            <person name="Feil E.J."/>
            <person name="Lindsay J.A."/>
            <person name="Peacock S.J."/>
            <person name="Day N.P.J."/>
            <person name="Enright M.C."/>
            <person name="Foster T.J."/>
            <person name="Moore C.E."/>
            <person name="Hurst L."/>
            <person name="Atkin R."/>
            <person name="Barron A."/>
            <person name="Bason N."/>
            <person name="Bentley S.D."/>
            <person name="Chillingworth C."/>
            <person name="Chillingworth T."/>
            <person name="Churcher C."/>
            <person name="Clark L."/>
            <person name="Corton C."/>
            <person name="Cronin A."/>
            <person name="Doggett J."/>
            <person name="Dowd L."/>
            <person name="Feltwell T."/>
            <person name="Hance Z."/>
            <person name="Harris B."/>
            <person name="Hauser H."/>
            <person name="Holroyd S."/>
            <person name="Jagels K."/>
            <person name="James K.D."/>
            <person name="Lennard N."/>
            <person name="Line A."/>
            <person name="Mayes R."/>
            <person name="Moule S."/>
            <person name="Mungall K."/>
            <person name="Ormond D."/>
            <person name="Quail M.A."/>
            <person name="Rabbinowitsch E."/>
            <person name="Rutherford K.M."/>
            <person name="Sanders M."/>
            <person name="Sharp S."/>
            <person name="Simmonds M."/>
            <person name="Stevens K."/>
            <person name="Whitehead S."/>
            <person name="Barrell B.G."/>
            <person name="Spratt B.G."/>
            <person name="Parkhill J."/>
        </authorList>
    </citation>
    <scope>NUCLEOTIDE SEQUENCE [LARGE SCALE GENOMIC DNA]</scope>
    <source>
        <strain>MRSA252</strain>
    </source>
</reference>
<dbReference type="EMBL" id="BX571856">
    <property type="protein sequence ID" value="CAG40804.1"/>
    <property type="molecule type" value="Genomic_DNA"/>
</dbReference>
<dbReference type="RefSeq" id="WP_001183986.1">
    <property type="nucleotide sequence ID" value="NC_002952.2"/>
</dbReference>
<dbReference type="SMR" id="Q6GFX3"/>
<dbReference type="KEGG" id="sar:SAR1813"/>
<dbReference type="HOGENOM" id="CLU_007727_8_0_9"/>
<dbReference type="UniPathway" id="UPA00040"/>
<dbReference type="Proteomes" id="UP000000596">
    <property type="component" value="Chromosome"/>
</dbReference>
<dbReference type="GO" id="GO:0004407">
    <property type="term" value="F:histone deacetylase activity"/>
    <property type="evidence" value="ECO:0007669"/>
    <property type="project" value="TreeGrafter"/>
</dbReference>
<dbReference type="GO" id="GO:0045150">
    <property type="term" value="P:acetoin catabolic process"/>
    <property type="evidence" value="ECO:0007669"/>
    <property type="project" value="UniProtKB-UniPathway"/>
</dbReference>
<dbReference type="GO" id="GO:0040029">
    <property type="term" value="P:epigenetic regulation of gene expression"/>
    <property type="evidence" value="ECO:0007669"/>
    <property type="project" value="TreeGrafter"/>
</dbReference>
<dbReference type="CDD" id="cd09994">
    <property type="entry name" value="HDAC_AcuC_like"/>
    <property type="match status" value="1"/>
</dbReference>
<dbReference type="Gene3D" id="3.40.800.20">
    <property type="entry name" value="Histone deacetylase domain"/>
    <property type="match status" value="1"/>
</dbReference>
<dbReference type="InterPro" id="IPR003085">
    <property type="entry name" value="AcuC"/>
</dbReference>
<dbReference type="InterPro" id="IPR050284">
    <property type="entry name" value="HDAC_PDAC"/>
</dbReference>
<dbReference type="InterPro" id="IPR000286">
    <property type="entry name" value="His_deacetylse"/>
</dbReference>
<dbReference type="InterPro" id="IPR023801">
    <property type="entry name" value="His_deacetylse_dom"/>
</dbReference>
<dbReference type="InterPro" id="IPR037138">
    <property type="entry name" value="His_deacetylse_dom_sf"/>
</dbReference>
<dbReference type="InterPro" id="IPR023696">
    <property type="entry name" value="Ureohydrolase_dom_sf"/>
</dbReference>
<dbReference type="PANTHER" id="PTHR10625:SF10">
    <property type="entry name" value="HISTONE DEACETYLASE HDAC1"/>
    <property type="match status" value="1"/>
</dbReference>
<dbReference type="PANTHER" id="PTHR10625">
    <property type="entry name" value="HISTONE DEACETYLASE HDAC1-RELATED"/>
    <property type="match status" value="1"/>
</dbReference>
<dbReference type="Pfam" id="PF00850">
    <property type="entry name" value="Hist_deacetyl"/>
    <property type="match status" value="1"/>
</dbReference>
<dbReference type="PRINTS" id="PR01272">
    <property type="entry name" value="ACUCPROTEIN"/>
</dbReference>
<dbReference type="PRINTS" id="PR01270">
    <property type="entry name" value="HDASUPER"/>
</dbReference>
<dbReference type="SUPFAM" id="SSF52768">
    <property type="entry name" value="Arginase/deacetylase"/>
    <property type="match status" value="1"/>
</dbReference>
<keyword id="KW-0006">Acetoin catabolism</keyword>